<dbReference type="EMBL" id="AL080282">
    <property type="protein sequence ID" value="CAB45899.1"/>
    <property type="molecule type" value="Genomic_DNA"/>
</dbReference>
<dbReference type="EMBL" id="AL161554">
    <property type="protein sequence ID" value="CAB79104.1"/>
    <property type="molecule type" value="Genomic_DNA"/>
</dbReference>
<dbReference type="EMBL" id="CP002687">
    <property type="protein sequence ID" value="AEE84390.1"/>
    <property type="molecule type" value="Genomic_DNA"/>
</dbReference>
<dbReference type="EMBL" id="AB493688">
    <property type="protein sequence ID" value="BAH30526.1"/>
    <property type="molecule type" value="Genomic_DNA"/>
</dbReference>
<dbReference type="PIR" id="T10646">
    <property type="entry name" value="T10646"/>
</dbReference>
<dbReference type="RefSeq" id="NP_193836.1">
    <property type="nucleotide sequence ID" value="NM_118222.1"/>
</dbReference>
<dbReference type="BioGRID" id="13142">
    <property type="interactions" value="2"/>
</dbReference>
<dbReference type="FunCoup" id="Q9SUB0">
    <property type="interactions" value="3"/>
</dbReference>
<dbReference type="IntAct" id="Q9SUB0">
    <property type="interactions" value="1"/>
</dbReference>
<dbReference type="PaxDb" id="3702-AT4G21040.1"/>
<dbReference type="DNASU" id="827851"/>
<dbReference type="EnsemblPlants" id="AT4G21040.1">
    <property type="protein sequence ID" value="AT4G21040.1"/>
    <property type="gene ID" value="AT4G21040"/>
</dbReference>
<dbReference type="GeneID" id="827851"/>
<dbReference type="Gramene" id="AT4G21040.1">
    <property type="protein sequence ID" value="AT4G21040.1"/>
    <property type="gene ID" value="AT4G21040"/>
</dbReference>
<dbReference type="KEGG" id="ath:AT4G21040"/>
<dbReference type="Araport" id="AT4G21040"/>
<dbReference type="TAIR" id="AT4G21040">
    <property type="gene designation" value="DOF4.3"/>
</dbReference>
<dbReference type="HOGENOM" id="CLU_108202_0_0_1"/>
<dbReference type="InParanoid" id="Q9SUB0"/>
<dbReference type="OMA" id="GKIKNNC"/>
<dbReference type="PhylomeDB" id="Q9SUB0"/>
<dbReference type="PRO" id="PR:Q9SUB0"/>
<dbReference type="Proteomes" id="UP000006548">
    <property type="component" value="Chromosome 4"/>
</dbReference>
<dbReference type="ExpressionAtlas" id="Q9SUB0">
    <property type="expression patterns" value="baseline"/>
</dbReference>
<dbReference type="GO" id="GO:0005634">
    <property type="term" value="C:nucleus"/>
    <property type="evidence" value="ECO:0007669"/>
    <property type="project" value="UniProtKB-SubCell"/>
</dbReference>
<dbReference type="GO" id="GO:0003700">
    <property type="term" value="F:DNA-binding transcription factor activity"/>
    <property type="evidence" value="ECO:0000250"/>
    <property type="project" value="TAIR"/>
</dbReference>
<dbReference type="GO" id="GO:0043565">
    <property type="term" value="F:sequence-specific DNA binding"/>
    <property type="evidence" value="ECO:0000314"/>
    <property type="project" value="TAIR"/>
</dbReference>
<dbReference type="GO" id="GO:0008270">
    <property type="term" value="F:zinc ion binding"/>
    <property type="evidence" value="ECO:0007669"/>
    <property type="project" value="UniProtKB-KW"/>
</dbReference>
<dbReference type="GO" id="GO:0006355">
    <property type="term" value="P:regulation of DNA-templated transcription"/>
    <property type="evidence" value="ECO:0000304"/>
    <property type="project" value="TAIR"/>
</dbReference>
<dbReference type="InterPro" id="IPR045174">
    <property type="entry name" value="Dof"/>
</dbReference>
<dbReference type="InterPro" id="IPR003851">
    <property type="entry name" value="Znf_Dof"/>
</dbReference>
<dbReference type="PANTHER" id="PTHR31992">
    <property type="entry name" value="DOF ZINC FINGER PROTEIN DOF1.4-RELATED"/>
    <property type="match status" value="1"/>
</dbReference>
<dbReference type="PANTHER" id="PTHR31992:SF126">
    <property type="entry name" value="DOF ZINC FINGER PROTEIN DOF4.2-RELATED"/>
    <property type="match status" value="1"/>
</dbReference>
<dbReference type="Pfam" id="PF02701">
    <property type="entry name" value="Zn_ribbon_Dof"/>
    <property type="match status" value="1"/>
</dbReference>
<dbReference type="PROSITE" id="PS01361">
    <property type="entry name" value="ZF_DOF_1"/>
    <property type="match status" value="1"/>
</dbReference>
<dbReference type="PROSITE" id="PS50884">
    <property type="entry name" value="ZF_DOF_2"/>
    <property type="match status" value="1"/>
</dbReference>
<comment type="function">
    <text evidence="1">Transcription factor that binds specifically to a 5'-AA[AG]G-3' consensus core sequence.</text>
</comment>
<comment type="subcellular location">
    <subcellularLocation>
        <location evidence="3">Nucleus</location>
    </subcellularLocation>
</comment>
<protein>
    <recommendedName>
        <fullName>Dof zinc finger protein DOF4.3</fullName>
        <shortName>AtDOF4.3</shortName>
    </recommendedName>
</protein>
<name>DOF43_ARATH</name>
<feature type="chain" id="PRO_0000074286" description="Dof zinc finger protein DOF4.3">
    <location>
        <begin position="1"/>
        <end position="232"/>
    </location>
</feature>
<feature type="zinc finger region" description="Dof-type" evidence="2">
    <location>
        <begin position="25"/>
        <end position="79"/>
    </location>
</feature>
<feature type="binding site" evidence="2">
    <location>
        <position position="27"/>
    </location>
    <ligand>
        <name>Zn(2+)</name>
        <dbReference type="ChEBI" id="CHEBI:29105"/>
    </ligand>
</feature>
<feature type="binding site" evidence="2">
    <location>
        <position position="30"/>
    </location>
    <ligand>
        <name>Zn(2+)</name>
        <dbReference type="ChEBI" id="CHEBI:29105"/>
    </ligand>
</feature>
<feature type="binding site" evidence="2">
    <location>
        <position position="52"/>
    </location>
    <ligand>
        <name>Zn(2+)</name>
        <dbReference type="ChEBI" id="CHEBI:29105"/>
    </ligand>
</feature>
<feature type="binding site" evidence="2">
    <location>
        <position position="55"/>
    </location>
    <ligand>
        <name>Zn(2+)</name>
        <dbReference type="ChEBI" id="CHEBI:29105"/>
    </ligand>
</feature>
<proteinExistence type="inferred from homology"/>
<reference key="1">
    <citation type="journal article" date="1999" name="Nature">
        <title>Sequence and analysis of chromosome 4 of the plant Arabidopsis thaliana.</title>
        <authorList>
            <person name="Mayer K.F.X."/>
            <person name="Schueller C."/>
            <person name="Wambutt R."/>
            <person name="Murphy G."/>
            <person name="Volckaert G."/>
            <person name="Pohl T."/>
            <person name="Duesterhoeft A."/>
            <person name="Stiekema W."/>
            <person name="Entian K.-D."/>
            <person name="Terryn N."/>
            <person name="Harris B."/>
            <person name="Ansorge W."/>
            <person name="Brandt P."/>
            <person name="Grivell L.A."/>
            <person name="Rieger M."/>
            <person name="Weichselgartner M."/>
            <person name="de Simone V."/>
            <person name="Obermaier B."/>
            <person name="Mache R."/>
            <person name="Mueller M."/>
            <person name="Kreis M."/>
            <person name="Delseny M."/>
            <person name="Puigdomenech P."/>
            <person name="Watson M."/>
            <person name="Schmidtheini T."/>
            <person name="Reichert B."/>
            <person name="Portetelle D."/>
            <person name="Perez-Alonso M."/>
            <person name="Boutry M."/>
            <person name="Bancroft I."/>
            <person name="Vos P."/>
            <person name="Hoheisel J."/>
            <person name="Zimmermann W."/>
            <person name="Wedler H."/>
            <person name="Ridley P."/>
            <person name="Langham S.-A."/>
            <person name="McCullagh B."/>
            <person name="Bilham L."/>
            <person name="Robben J."/>
            <person name="van der Schueren J."/>
            <person name="Grymonprez B."/>
            <person name="Chuang Y.-J."/>
            <person name="Vandenbussche F."/>
            <person name="Braeken M."/>
            <person name="Weltjens I."/>
            <person name="Voet M."/>
            <person name="Bastiaens I."/>
            <person name="Aert R."/>
            <person name="Defoor E."/>
            <person name="Weitzenegger T."/>
            <person name="Bothe G."/>
            <person name="Ramsperger U."/>
            <person name="Hilbert H."/>
            <person name="Braun M."/>
            <person name="Holzer E."/>
            <person name="Brandt A."/>
            <person name="Peters S."/>
            <person name="van Staveren M."/>
            <person name="Dirkse W."/>
            <person name="Mooijman P."/>
            <person name="Klein Lankhorst R."/>
            <person name="Rose M."/>
            <person name="Hauf J."/>
            <person name="Koetter P."/>
            <person name="Berneiser S."/>
            <person name="Hempel S."/>
            <person name="Feldpausch M."/>
            <person name="Lamberth S."/>
            <person name="Van den Daele H."/>
            <person name="De Keyser A."/>
            <person name="Buysshaert C."/>
            <person name="Gielen J."/>
            <person name="Villarroel R."/>
            <person name="De Clercq R."/>
            <person name="van Montagu M."/>
            <person name="Rogers J."/>
            <person name="Cronin A."/>
            <person name="Quail M.A."/>
            <person name="Bray-Allen S."/>
            <person name="Clark L."/>
            <person name="Doggett J."/>
            <person name="Hall S."/>
            <person name="Kay M."/>
            <person name="Lennard N."/>
            <person name="McLay K."/>
            <person name="Mayes R."/>
            <person name="Pettett A."/>
            <person name="Rajandream M.A."/>
            <person name="Lyne M."/>
            <person name="Benes V."/>
            <person name="Rechmann S."/>
            <person name="Borkova D."/>
            <person name="Bloecker H."/>
            <person name="Scharfe M."/>
            <person name="Grimm M."/>
            <person name="Loehnert T.-H."/>
            <person name="Dose S."/>
            <person name="de Haan M."/>
            <person name="Maarse A.C."/>
            <person name="Schaefer M."/>
            <person name="Mueller-Auer S."/>
            <person name="Gabel C."/>
            <person name="Fuchs M."/>
            <person name="Fartmann B."/>
            <person name="Granderath K."/>
            <person name="Dauner D."/>
            <person name="Herzl A."/>
            <person name="Neumann S."/>
            <person name="Argiriou A."/>
            <person name="Vitale D."/>
            <person name="Liguori R."/>
            <person name="Piravandi E."/>
            <person name="Massenet O."/>
            <person name="Quigley F."/>
            <person name="Clabauld G."/>
            <person name="Muendlein A."/>
            <person name="Felber R."/>
            <person name="Schnabl S."/>
            <person name="Hiller R."/>
            <person name="Schmidt W."/>
            <person name="Lecharny A."/>
            <person name="Aubourg S."/>
            <person name="Chefdor F."/>
            <person name="Cooke R."/>
            <person name="Berger C."/>
            <person name="Monfort A."/>
            <person name="Casacuberta E."/>
            <person name="Gibbons T."/>
            <person name="Weber N."/>
            <person name="Vandenbol M."/>
            <person name="Bargues M."/>
            <person name="Terol J."/>
            <person name="Torres A."/>
            <person name="Perez-Perez A."/>
            <person name="Purnelle B."/>
            <person name="Bent E."/>
            <person name="Johnson S."/>
            <person name="Tacon D."/>
            <person name="Jesse T."/>
            <person name="Heijnen L."/>
            <person name="Schwarz S."/>
            <person name="Scholler P."/>
            <person name="Heber S."/>
            <person name="Francs P."/>
            <person name="Bielke C."/>
            <person name="Frishman D."/>
            <person name="Haase D."/>
            <person name="Lemcke K."/>
            <person name="Mewes H.-W."/>
            <person name="Stocker S."/>
            <person name="Zaccaria P."/>
            <person name="Bevan M."/>
            <person name="Wilson R.K."/>
            <person name="de la Bastide M."/>
            <person name="Habermann K."/>
            <person name="Parnell L."/>
            <person name="Dedhia N."/>
            <person name="Gnoj L."/>
            <person name="Schutz K."/>
            <person name="Huang E."/>
            <person name="Spiegel L."/>
            <person name="Sekhon M."/>
            <person name="Murray J."/>
            <person name="Sheet P."/>
            <person name="Cordes M."/>
            <person name="Abu-Threideh J."/>
            <person name="Stoneking T."/>
            <person name="Kalicki J."/>
            <person name="Graves T."/>
            <person name="Harmon G."/>
            <person name="Edwards J."/>
            <person name="Latreille P."/>
            <person name="Courtney L."/>
            <person name="Cloud J."/>
            <person name="Abbott A."/>
            <person name="Scott K."/>
            <person name="Johnson D."/>
            <person name="Minx P."/>
            <person name="Bentley D."/>
            <person name="Fulton B."/>
            <person name="Miller N."/>
            <person name="Greco T."/>
            <person name="Kemp K."/>
            <person name="Kramer J."/>
            <person name="Fulton L."/>
            <person name="Mardis E."/>
            <person name="Dante M."/>
            <person name="Pepin K."/>
            <person name="Hillier L.W."/>
            <person name="Nelson J."/>
            <person name="Spieth J."/>
            <person name="Ryan E."/>
            <person name="Andrews S."/>
            <person name="Geisel C."/>
            <person name="Layman D."/>
            <person name="Du H."/>
            <person name="Ali J."/>
            <person name="Berghoff A."/>
            <person name="Jones K."/>
            <person name="Drone K."/>
            <person name="Cotton M."/>
            <person name="Joshu C."/>
            <person name="Antonoiu B."/>
            <person name="Zidanic M."/>
            <person name="Strong C."/>
            <person name="Sun H."/>
            <person name="Lamar B."/>
            <person name="Yordan C."/>
            <person name="Ma P."/>
            <person name="Zhong J."/>
            <person name="Preston R."/>
            <person name="Vil D."/>
            <person name="Shekher M."/>
            <person name="Matero A."/>
            <person name="Shah R."/>
            <person name="Swaby I.K."/>
            <person name="O'Shaughnessy A."/>
            <person name="Rodriguez M."/>
            <person name="Hoffman J."/>
            <person name="Till S."/>
            <person name="Granat S."/>
            <person name="Shohdy N."/>
            <person name="Hasegawa A."/>
            <person name="Hameed A."/>
            <person name="Lodhi M."/>
            <person name="Johnson A."/>
            <person name="Chen E."/>
            <person name="Marra M.A."/>
            <person name="Martienssen R."/>
            <person name="McCombie W.R."/>
        </authorList>
    </citation>
    <scope>NUCLEOTIDE SEQUENCE [LARGE SCALE GENOMIC DNA]</scope>
    <source>
        <strain>cv. Columbia</strain>
    </source>
</reference>
<reference key="2">
    <citation type="journal article" date="2017" name="Plant J.">
        <title>Araport11: a complete reannotation of the Arabidopsis thaliana reference genome.</title>
        <authorList>
            <person name="Cheng C.Y."/>
            <person name="Krishnakumar V."/>
            <person name="Chan A.P."/>
            <person name="Thibaud-Nissen F."/>
            <person name="Schobel S."/>
            <person name="Town C.D."/>
        </authorList>
    </citation>
    <scope>GENOME REANNOTATION</scope>
    <source>
        <strain>cv. Columbia</strain>
    </source>
</reference>
<reference key="3">
    <citation type="submission" date="2009-03" db="EMBL/GenBank/DDBJ databases">
        <title>ORF cloning and analysis of Arabidopsis transcription factor genes.</title>
        <authorList>
            <person name="Fujita M."/>
            <person name="Mizukado S."/>
            <person name="Seki M."/>
            <person name="Shinozaki K."/>
            <person name="Mitsuda N."/>
            <person name="Takiguchi Y."/>
            <person name="Takagi M."/>
        </authorList>
    </citation>
    <scope>NUCLEOTIDE SEQUENCE [LARGE SCALE GENOMIC DNA]</scope>
</reference>
<reference key="4">
    <citation type="journal article" date="2002" name="Trends Plant Sci.">
        <title>The Dof family of plant transcription factors.</title>
        <authorList>
            <person name="Yanagisawa S."/>
        </authorList>
    </citation>
    <scope>GENE FAMILY</scope>
    <scope>NOMENCLATURE</scope>
</reference>
<sequence>MDNFNVVANEDNQVNDVKPPPPPPRVCARCDSDNTKFCYYNNYSEFQPRYFCKNCRRYWTHGGALRNVPIGGSSRAKRTRINQPSVAQMVSVGIQPGSHKPFFNVQENNDFVGSFGASSSSFVAAVGNRFSSLSHIHGGMVTNVHPTQTFRPNHRLAFHNGSFEQDYYDVGSDNLLVNQQVGGYVDNHNGYHMNQVDQYNWNQSFNNAMNMNYNNASTSGRMHPSHLEKGGP</sequence>
<keyword id="KW-0238">DNA-binding</keyword>
<keyword id="KW-0479">Metal-binding</keyword>
<keyword id="KW-0539">Nucleus</keyword>
<keyword id="KW-1185">Reference proteome</keyword>
<keyword id="KW-0804">Transcription</keyword>
<keyword id="KW-0805">Transcription regulation</keyword>
<keyword id="KW-0862">Zinc</keyword>
<keyword id="KW-0863">Zinc-finger</keyword>
<evidence type="ECO:0000250" key="1"/>
<evidence type="ECO:0000255" key="2">
    <source>
        <dbReference type="PROSITE-ProRule" id="PRU00071"/>
    </source>
</evidence>
<evidence type="ECO:0000305" key="3"/>
<gene>
    <name type="primary">DOF4.3</name>
    <name type="ordered locus">At4g21040</name>
    <name type="ORF">T13K14.200</name>
</gene>
<accession>Q9SUB0</accession>
<accession>C0SVI5</accession>
<organism>
    <name type="scientific">Arabidopsis thaliana</name>
    <name type="common">Mouse-ear cress</name>
    <dbReference type="NCBI Taxonomy" id="3702"/>
    <lineage>
        <taxon>Eukaryota</taxon>
        <taxon>Viridiplantae</taxon>
        <taxon>Streptophyta</taxon>
        <taxon>Embryophyta</taxon>
        <taxon>Tracheophyta</taxon>
        <taxon>Spermatophyta</taxon>
        <taxon>Magnoliopsida</taxon>
        <taxon>eudicotyledons</taxon>
        <taxon>Gunneridae</taxon>
        <taxon>Pentapetalae</taxon>
        <taxon>rosids</taxon>
        <taxon>malvids</taxon>
        <taxon>Brassicales</taxon>
        <taxon>Brassicaceae</taxon>
        <taxon>Camelineae</taxon>
        <taxon>Arabidopsis</taxon>
    </lineage>
</organism>